<evidence type="ECO:0000255" key="1"/>
<evidence type="ECO:0000255" key="2">
    <source>
        <dbReference type="PROSITE-ProRule" id="PRU00798"/>
    </source>
</evidence>
<evidence type="ECO:0000256" key="3">
    <source>
        <dbReference type="SAM" id="MobiDB-lite"/>
    </source>
</evidence>
<evidence type="ECO:0000269" key="4">
    <source>
    </source>
</evidence>
<evidence type="ECO:0000269" key="5">
    <source>
    </source>
</evidence>
<evidence type="ECO:0000269" key="6">
    <source>
    </source>
</evidence>
<evidence type="ECO:0000269" key="7">
    <source>
    </source>
</evidence>
<evidence type="ECO:0000269" key="8">
    <source>
    </source>
</evidence>
<evidence type="ECO:0000269" key="9">
    <source>
    </source>
</evidence>
<evidence type="ECO:0000269" key="10">
    <source>
    </source>
</evidence>
<evidence type="ECO:0000269" key="11">
    <source>
    </source>
</evidence>
<evidence type="ECO:0000269" key="12">
    <source>
    </source>
</evidence>
<evidence type="ECO:0000269" key="13">
    <source>
    </source>
</evidence>
<evidence type="ECO:0000269" key="14">
    <source ref="2"/>
</evidence>
<evidence type="ECO:0000269" key="15">
    <source ref="3"/>
</evidence>
<evidence type="ECO:0000303" key="16">
    <source>
    </source>
</evidence>
<evidence type="ECO:0000303" key="17">
    <source>
    </source>
</evidence>
<evidence type="ECO:0000303" key="18">
    <source>
    </source>
</evidence>
<evidence type="ECO:0000303" key="19">
    <source>
    </source>
</evidence>
<evidence type="ECO:0000305" key="20"/>
<evidence type="ECO:0000305" key="21">
    <source>
    </source>
</evidence>
<evidence type="ECO:0000305" key="22">
    <source>
    </source>
</evidence>
<evidence type="ECO:0000305" key="23">
    <source>
    </source>
</evidence>
<evidence type="ECO:0000305" key="24">
    <source>
    </source>
</evidence>
<evidence type="ECO:0000305" key="25">
    <source>
    </source>
</evidence>
<keyword id="KW-0007">Acetylation</keyword>
<keyword id="KW-0025">Alternative splicing</keyword>
<keyword id="KW-1003">Cell membrane</keyword>
<keyword id="KW-1015">Disulfide bond</keyword>
<keyword id="KW-0325">Glycoprotein</keyword>
<keyword id="KW-0406">Ion transport</keyword>
<keyword id="KW-0472">Membrane</keyword>
<keyword id="KW-1267">Proteomics identification</keyword>
<keyword id="KW-1185">Reference proteome</keyword>
<keyword id="KW-0812">Transmembrane</keyword>
<keyword id="KW-1133">Transmembrane helix</keyword>
<keyword id="KW-0813">Transport</keyword>
<organism>
    <name type="scientific">Homo sapiens</name>
    <name type="common">Human</name>
    <dbReference type="NCBI Taxonomy" id="9606"/>
    <lineage>
        <taxon>Eukaryota</taxon>
        <taxon>Metazoa</taxon>
        <taxon>Chordata</taxon>
        <taxon>Craniata</taxon>
        <taxon>Vertebrata</taxon>
        <taxon>Euteleostomi</taxon>
        <taxon>Mammalia</taxon>
        <taxon>Eutheria</taxon>
        <taxon>Euarchontoglires</taxon>
        <taxon>Primates</taxon>
        <taxon>Haplorrhini</taxon>
        <taxon>Catarrhini</taxon>
        <taxon>Hominidae</taxon>
        <taxon>Homo</taxon>
    </lineage>
</organism>
<reference key="1">
    <citation type="journal article" date="2000" name="Biochem. Biophys. Res. Commun.">
        <title>Molecular identification and characterization of novel members of the human organic anion transporter (OATP) family.</title>
        <authorList>
            <person name="Tamai I."/>
            <person name="Nezu J."/>
            <person name="Uchino H."/>
            <person name="Sai Y."/>
            <person name="Oku A."/>
            <person name="Shimane M."/>
            <person name="Tsuji A."/>
        </authorList>
    </citation>
    <scope>NUCLEOTIDE SEQUENCE [MRNA] (ISOFORM 1)</scope>
    <scope>FUNCTION</scope>
    <scope>TRANSPORTER ACTIVITY (ISOFORM 1)</scope>
    <scope>VARIANT ASP-294</scope>
    <scope>TISSUE SPECIFICITY</scope>
    <source>
        <tissue>Kidney</tissue>
    </source>
</reference>
<reference key="2">
    <citation type="submission" date="1999-11" db="EMBL/GenBank/DDBJ databases">
        <title>Identification and characterization of novel human OATP family members.</title>
        <authorList>
            <person name="Wu Y."/>
            <person name="Hsiang B.H."/>
            <person name="Zhu Y."/>
            <person name="Yang W.-P."/>
            <person name="Kirchgessner T.G."/>
        </authorList>
    </citation>
    <scope>NUCLEOTIDE SEQUENCE [MRNA] (ISOFORM 1)</scope>
    <scope>VARIANT ASP-294</scope>
</reference>
<reference key="3">
    <citation type="submission" date="2001-01" db="EMBL/GenBank/DDBJ databases">
        <title>Molecular identification of human PGE1 transporter expressed in cancer.</title>
        <authorList>
            <person name="Adachi H."/>
            <person name="Unno M."/>
            <person name="Matsuno S."/>
            <person name="Yawo H."/>
            <person name="Abe T."/>
        </authorList>
    </citation>
    <scope>NUCLEOTIDE SEQUENCE [MRNA] (ISOFORM 1)</scope>
    <scope>VARIANT ASP-294</scope>
</reference>
<reference key="4">
    <citation type="journal article" date="2004" name="Nat. Genet.">
        <title>Complete sequencing and characterization of 21,243 full-length human cDNAs.</title>
        <authorList>
            <person name="Ota T."/>
            <person name="Suzuki Y."/>
            <person name="Nishikawa T."/>
            <person name="Otsuki T."/>
            <person name="Sugiyama T."/>
            <person name="Irie R."/>
            <person name="Wakamatsu A."/>
            <person name="Hayashi K."/>
            <person name="Sato H."/>
            <person name="Nagai K."/>
            <person name="Kimura K."/>
            <person name="Makita H."/>
            <person name="Sekine M."/>
            <person name="Obayashi M."/>
            <person name="Nishi T."/>
            <person name="Shibahara T."/>
            <person name="Tanaka T."/>
            <person name="Ishii S."/>
            <person name="Yamamoto J."/>
            <person name="Saito K."/>
            <person name="Kawai Y."/>
            <person name="Isono Y."/>
            <person name="Nakamura Y."/>
            <person name="Nagahari K."/>
            <person name="Murakami K."/>
            <person name="Yasuda T."/>
            <person name="Iwayanagi T."/>
            <person name="Wagatsuma M."/>
            <person name="Shiratori A."/>
            <person name="Sudo H."/>
            <person name="Hosoiri T."/>
            <person name="Kaku Y."/>
            <person name="Kodaira H."/>
            <person name="Kondo H."/>
            <person name="Sugawara M."/>
            <person name="Takahashi M."/>
            <person name="Kanda K."/>
            <person name="Yokoi T."/>
            <person name="Furuya T."/>
            <person name="Kikkawa E."/>
            <person name="Omura Y."/>
            <person name="Abe K."/>
            <person name="Kamihara K."/>
            <person name="Katsuta N."/>
            <person name="Sato K."/>
            <person name="Tanikawa M."/>
            <person name="Yamazaki M."/>
            <person name="Ninomiya K."/>
            <person name="Ishibashi T."/>
            <person name="Yamashita H."/>
            <person name="Murakawa K."/>
            <person name="Fujimori K."/>
            <person name="Tanai H."/>
            <person name="Kimata M."/>
            <person name="Watanabe M."/>
            <person name="Hiraoka S."/>
            <person name="Chiba Y."/>
            <person name="Ishida S."/>
            <person name="Ono Y."/>
            <person name="Takiguchi S."/>
            <person name="Watanabe S."/>
            <person name="Yosida M."/>
            <person name="Hotuta T."/>
            <person name="Kusano J."/>
            <person name="Kanehori K."/>
            <person name="Takahashi-Fujii A."/>
            <person name="Hara H."/>
            <person name="Tanase T.-O."/>
            <person name="Nomura Y."/>
            <person name="Togiya S."/>
            <person name="Komai F."/>
            <person name="Hara R."/>
            <person name="Takeuchi K."/>
            <person name="Arita M."/>
            <person name="Imose N."/>
            <person name="Musashino K."/>
            <person name="Yuuki H."/>
            <person name="Oshima A."/>
            <person name="Sasaki N."/>
            <person name="Aotsuka S."/>
            <person name="Yoshikawa Y."/>
            <person name="Matsunawa H."/>
            <person name="Ichihara T."/>
            <person name="Shiohata N."/>
            <person name="Sano S."/>
            <person name="Moriya S."/>
            <person name="Momiyama H."/>
            <person name="Satoh N."/>
            <person name="Takami S."/>
            <person name="Terashima Y."/>
            <person name="Suzuki O."/>
            <person name="Nakagawa S."/>
            <person name="Senoh A."/>
            <person name="Mizoguchi H."/>
            <person name="Goto Y."/>
            <person name="Shimizu F."/>
            <person name="Wakebe H."/>
            <person name="Hishigaki H."/>
            <person name="Watanabe T."/>
            <person name="Sugiyama A."/>
            <person name="Takemoto M."/>
            <person name="Kawakami B."/>
            <person name="Yamazaki M."/>
            <person name="Watanabe K."/>
            <person name="Kumagai A."/>
            <person name="Itakura S."/>
            <person name="Fukuzumi Y."/>
            <person name="Fujimori Y."/>
            <person name="Komiyama M."/>
            <person name="Tashiro H."/>
            <person name="Tanigami A."/>
            <person name="Fujiwara T."/>
            <person name="Ono T."/>
            <person name="Yamada K."/>
            <person name="Fujii Y."/>
            <person name="Ozaki K."/>
            <person name="Hirao M."/>
            <person name="Ohmori Y."/>
            <person name="Kawabata A."/>
            <person name="Hikiji T."/>
            <person name="Kobatake N."/>
            <person name="Inagaki H."/>
            <person name="Ikema Y."/>
            <person name="Okamoto S."/>
            <person name="Okitani R."/>
            <person name="Kawakami T."/>
            <person name="Noguchi S."/>
            <person name="Itoh T."/>
            <person name="Shigeta K."/>
            <person name="Senba T."/>
            <person name="Matsumura K."/>
            <person name="Nakajima Y."/>
            <person name="Mizuno T."/>
            <person name="Morinaga M."/>
            <person name="Sasaki M."/>
            <person name="Togashi T."/>
            <person name="Oyama M."/>
            <person name="Hata H."/>
            <person name="Watanabe M."/>
            <person name="Komatsu T."/>
            <person name="Mizushima-Sugano J."/>
            <person name="Satoh T."/>
            <person name="Shirai Y."/>
            <person name="Takahashi Y."/>
            <person name="Nakagawa K."/>
            <person name="Okumura K."/>
            <person name="Nagase T."/>
            <person name="Nomura N."/>
            <person name="Kikuchi H."/>
            <person name="Masuho Y."/>
            <person name="Yamashita R."/>
            <person name="Nakai K."/>
            <person name="Yada T."/>
            <person name="Nakamura Y."/>
            <person name="Ohara O."/>
            <person name="Isogai T."/>
            <person name="Sugano S."/>
        </authorList>
    </citation>
    <scope>NUCLEOTIDE SEQUENCE [LARGE SCALE MRNA] (ISOFORMS 1; 3 AND 4)</scope>
    <scope>VARIANT ASP-294</scope>
    <source>
        <tissue>Mesangial cell</tissue>
        <tissue>Testis</tissue>
    </source>
</reference>
<reference key="5">
    <citation type="submission" date="2008-12" db="EMBL/GenBank/DDBJ databases">
        <authorList>
            <consortium name="NHLBI resequencing and genotyping service (RS&amp;G)"/>
        </authorList>
    </citation>
    <scope>NUCLEOTIDE SEQUENCE [GENOMIC DNA]</scope>
</reference>
<reference key="6">
    <citation type="journal article" date="2006" name="Nature">
        <title>Analysis of the DNA sequence and duplication history of human chromosome 15.</title>
        <authorList>
            <person name="Zody M.C."/>
            <person name="Garber M."/>
            <person name="Sharpe T."/>
            <person name="Young S.K."/>
            <person name="Rowen L."/>
            <person name="O'Neill K."/>
            <person name="Whittaker C.A."/>
            <person name="Kamal M."/>
            <person name="Chang J.L."/>
            <person name="Cuomo C.A."/>
            <person name="Dewar K."/>
            <person name="FitzGerald M.G."/>
            <person name="Kodira C.D."/>
            <person name="Madan A."/>
            <person name="Qin S."/>
            <person name="Yang X."/>
            <person name="Abbasi N."/>
            <person name="Abouelleil A."/>
            <person name="Arachchi H.M."/>
            <person name="Baradarani L."/>
            <person name="Birditt B."/>
            <person name="Bloom S."/>
            <person name="Bloom T."/>
            <person name="Borowsky M.L."/>
            <person name="Burke J."/>
            <person name="Butler J."/>
            <person name="Cook A."/>
            <person name="DeArellano K."/>
            <person name="DeCaprio D."/>
            <person name="Dorris L. III"/>
            <person name="Dors M."/>
            <person name="Eichler E.E."/>
            <person name="Engels R."/>
            <person name="Fahey J."/>
            <person name="Fleetwood P."/>
            <person name="Friedman C."/>
            <person name="Gearin G."/>
            <person name="Hall J.L."/>
            <person name="Hensley G."/>
            <person name="Johnson E."/>
            <person name="Jones C."/>
            <person name="Kamat A."/>
            <person name="Kaur A."/>
            <person name="Locke D.P."/>
            <person name="Madan A."/>
            <person name="Munson G."/>
            <person name="Jaffe D.B."/>
            <person name="Lui A."/>
            <person name="Macdonald P."/>
            <person name="Mauceli E."/>
            <person name="Naylor J.W."/>
            <person name="Nesbitt R."/>
            <person name="Nicol R."/>
            <person name="O'Leary S.B."/>
            <person name="Ratcliffe A."/>
            <person name="Rounsley S."/>
            <person name="She X."/>
            <person name="Sneddon K.M.B."/>
            <person name="Stewart S."/>
            <person name="Sougnez C."/>
            <person name="Stone S.M."/>
            <person name="Topham K."/>
            <person name="Vincent D."/>
            <person name="Wang S."/>
            <person name="Zimmer A.R."/>
            <person name="Birren B.W."/>
            <person name="Hood L."/>
            <person name="Lander E.S."/>
            <person name="Nusbaum C."/>
        </authorList>
    </citation>
    <scope>NUCLEOTIDE SEQUENCE [LARGE SCALE GENOMIC DNA]</scope>
</reference>
<reference key="7">
    <citation type="journal article" date="2004" name="Genome Res.">
        <title>The status, quality, and expansion of the NIH full-length cDNA project: the Mammalian Gene Collection (MGC).</title>
        <authorList>
            <consortium name="The MGC Project Team"/>
        </authorList>
    </citation>
    <scope>NUCLEOTIDE SEQUENCE [LARGE SCALE MRNA] (ISOFORM 2)</scope>
    <scope>VARIANT ASP-294</scope>
    <source>
        <tissue>Brain</tissue>
    </source>
</reference>
<reference key="8">
    <citation type="journal article" date="2003" name="Am. J. Physiol.">
        <title>Characterization and identification of steroid sulfate transporters of human placenta.</title>
        <authorList>
            <person name="Ugele B."/>
            <person name="St-Pierre M.V."/>
            <person name="Pihusch M."/>
            <person name="Bahn A."/>
            <person name="Hantschmann P."/>
        </authorList>
    </citation>
    <scope>TISSUE SPECIFICITY</scope>
</reference>
<reference key="9">
    <citation type="journal article" date="2003" name="Am. J. Physiol.">
        <title>Molecular characterization of human and rat organic anion transporter OATP-D.</title>
        <authorList>
            <person name="Adachi H."/>
            <person name="Suzuki T."/>
            <person name="Abe M."/>
            <person name="Asano N."/>
            <person name="Mizutamari H."/>
            <person name="Tanemoto M."/>
            <person name="Nishio T."/>
            <person name="Onogawa T."/>
            <person name="Toyohara T."/>
            <person name="Kasai S."/>
            <person name="Satoh F."/>
            <person name="Suzuki M."/>
            <person name="Tokui T."/>
            <person name="Unno M."/>
            <person name="Shimosegawa T."/>
            <person name="Matsuno S."/>
            <person name="Ito S."/>
            <person name="Abe T."/>
        </authorList>
    </citation>
    <scope>FUNCTION</scope>
    <scope>TRANSPORTER ACTIVITY (ISOFORM 1)</scope>
    <scope>BIOPHYSICOCHEMICAL PROPERTIES (ISOFORM 1)</scope>
    <scope>TISSUE SPECIFICITY (ISOFORM 1)</scope>
</reference>
<reference key="10">
    <citation type="journal article" date="2007" name="Am. J. Physiol.">
        <title>Characterization of two splice variants of human organic anion transporting polypeptide 3A1 isolated from human brain.</title>
        <authorList>
            <person name="Huber R.D."/>
            <person name="Gao B."/>
            <person name="Sidler Pfaendler M.-A."/>
            <person name="Zhang-Fu W."/>
            <person name="Leuthold S."/>
            <person name="Hagenbuch B."/>
            <person name="Folkers G."/>
            <person name="Meier P.J."/>
            <person name="Stieger B."/>
        </authorList>
    </citation>
    <scope>ALTERNATIVE SPLICING</scope>
    <scope>FUNCTION</scope>
    <scope>TRANSPORTER ACTIVITY (ISOFORMS 1 AND 2)</scope>
    <scope>BIOPHYSICOCHEMICAL PROPERTIES (ISOFORMS 1 AND 2)</scope>
    <scope>SUBCELLULAR LOCATION (ISOFORMS 1 AND 2)</scope>
    <scope>TISSUE SPECIFICITY</scope>
</reference>
<reference key="11">
    <citation type="journal article" date="2009" name="Am. J. Physiol.">
        <title>Mechanisms of pH-gradient driven transport mediated by organic anion polypeptide transporters.</title>
        <authorList>
            <person name="Leuthold S."/>
            <person name="Hagenbuch B."/>
            <person name="Mohebbi N."/>
            <person name="Wagner C.A."/>
            <person name="Meier P.J."/>
            <person name="Stieger B."/>
        </authorList>
    </citation>
    <scope>FUNCTION</scope>
    <scope>TRANSPORTER ACTIVITY (ISOFORMS 1 AND 2)</scope>
    <scope>ACTIVITY REGULATION</scope>
</reference>
<reference key="12">
    <citation type="journal article" date="2012" name="Proc. Natl. Acad. Sci. U.S.A.">
        <title>N-terminal acetylome analyses and functional insights of the N-terminal acetyltransferase NatB.</title>
        <authorList>
            <person name="Van Damme P."/>
            <person name="Lasa M."/>
            <person name="Polevoda B."/>
            <person name="Gazquez C."/>
            <person name="Elosegui-Artola A."/>
            <person name="Kim D.S."/>
            <person name="De Juan-Pardo E."/>
            <person name="Demeyer K."/>
            <person name="Hole K."/>
            <person name="Larrea E."/>
            <person name="Timmerman E."/>
            <person name="Prieto J."/>
            <person name="Arnesen T."/>
            <person name="Sherman F."/>
            <person name="Gevaert K."/>
            <person name="Aldabe R."/>
        </authorList>
    </citation>
    <scope>IDENTIFICATION BY MASS SPECTROMETRY [LARGE SCALE ANALYSIS]</scope>
</reference>
<reference key="13">
    <citation type="journal article" date="2015" name="Cell Rep.">
        <title>An organellar nalpha-acetyltransferase, naa60, acetylates cytosolic N termini of transmembrane proteins and maintains Golgi integrity.</title>
        <authorList>
            <person name="Aksnes H."/>
            <person name="Van Damme P."/>
            <person name="Goris M."/>
            <person name="Starheim K.K."/>
            <person name="Marie M."/>
            <person name="Stoeve S.I."/>
            <person name="Hoel C."/>
            <person name="Kalvik T.V."/>
            <person name="Hole K."/>
            <person name="Glomnes N."/>
            <person name="Furnes C."/>
            <person name="Ljostveit S."/>
            <person name="Ziegler M."/>
            <person name="Niere M."/>
            <person name="Gevaert K."/>
            <person name="Arnesen T."/>
        </authorList>
    </citation>
    <scope>ACETYLATION AT MET-1</scope>
</reference>
<reference key="14">
    <citation type="journal article" date="2018" name="Gastroenterology">
        <title>Solute Carrier Organic Anion Transporter Family Member 3A1 Is a Bile Acid Efflux Transporter in Cholestasis.</title>
        <authorList>
            <person name="Pan Q."/>
            <person name="Zhang X."/>
            <person name="Zhang L."/>
            <person name="Cheng Y."/>
            <person name="Zhao N."/>
            <person name="Li F."/>
            <person name="Zhou X."/>
            <person name="Chen S."/>
            <person name="Li J."/>
            <person name="Xu S."/>
            <person name="Huang D."/>
            <person name="Chen Y."/>
            <person name="Li L."/>
            <person name="Wang H."/>
            <person name="Chen W."/>
            <person name="Cai S.Y."/>
            <person name="Boyer J.L."/>
            <person name="Chai J."/>
        </authorList>
    </citation>
    <scope>FUNCTION</scope>
    <scope>TRANSPORTER ACTIVITY</scope>
    <scope>INDUCTION BY FGF19</scope>
</reference>
<reference key="15">
    <citation type="journal article" date="2022" name="Drug Metab. Dispos.">
        <title>Localization of Xenobiotic Transporters Expressed at the Human Blood-Testis Barrier.</title>
        <authorList>
            <person name="Hau R.K."/>
            <person name="Klein R.R."/>
            <person name="Wright S.H."/>
            <person name="Cherrington N.J."/>
        </authorList>
    </citation>
    <scope>SUBCELLULAR LOCATION</scope>
    <scope>TISSUE SPECIFICITY</scope>
</reference>
<feature type="chain" id="PRO_0000191064" description="Solute carrier organic anion transporter family member 3A1">
    <location>
        <begin position="1"/>
        <end position="710"/>
    </location>
</feature>
<feature type="topological domain" description="Cytoplasmic" evidence="1">
    <location>
        <begin position="1"/>
        <end position="40"/>
    </location>
</feature>
<feature type="transmembrane region" description="Helical; Name=1" evidence="1">
    <location>
        <begin position="41"/>
        <end position="60"/>
    </location>
</feature>
<feature type="topological domain" description="Extracellular" evidence="1">
    <location>
        <begin position="61"/>
        <end position="79"/>
    </location>
</feature>
<feature type="transmembrane region" description="Helical; Name=2" evidence="1">
    <location>
        <begin position="80"/>
        <end position="100"/>
    </location>
</feature>
<feature type="topological domain" description="Cytoplasmic" evidence="1">
    <location>
        <begin position="101"/>
        <end position="106"/>
    </location>
</feature>
<feature type="transmembrane region" description="Helical; Name=3" evidence="1">
    <location>
        <begin position="107"/>
        <end position="131"/>
    </location>
</feature>
<feature type="topological domain" description="Extracellular" evidence="1">
    <location>
        <begin position="132"/>
        <end position="174"/>
    </location>
</feature>
<feature type="transmembrane region" description="Helical; Name=4" evidence="1">
    <location>
        <begin position="175"/>
        <end position="203"/>
    </location>
</feature>
<feature type="topological domain" description="Cytoplasmic" evidence="1">
    <location>
        <begin position="204"/>
        <end position="222"/>
    </location>
</feature>
<feature type="transmembrane region" description="Helical; Name=5" evidence="1">
    <location>
        <begin position="223"/>
        <end position="243"/>
    </location>
</feature>
<feature type="topological domain" description="Extracellular" evidence="1">
    <location>
        <begin position="244"/>
        <end position="261"/>
    </location>
</feature>
<feature type="transmembrane region" description="Helical; Name=6" evidence="1">
    <location>
        <begin position="262"/>
        <end position="286"/>
    </location>
</feature>
<feature type="topological domain" description="Cytoplasmic" evidence="1">
    <location>
        <begin position="287"/>
        <end position="344"/>
    </location>
</feature>
<feature type="transmembrane region" description="Helical; Name=7" evidence="1">
    <location>
        <begin position="345"/>
        <end position="366"/>
    </location>
</feature>
<feature type="topological domain" description="Extracellular" evidence="1">
    <location>
        <begin position="367"/>
        <end position="386"/>
    </location>
</feature>
<feature type="transmembrane region" description="Helical; Name=8" evidence="1">
    <location>
        <begin position="387"/>
        <end position="410"/>
    </location>
</feature>
<feature type="topological domain" description="Cytoplasmic" evidence="1">
    <location>
        <begin position="411"/>
        <end position="414"/>
    </location>
</feature>
<feature type="transmembrane region" description="Helical; Name=9" evidence="1">
    <location>
        <begin position="415"/>
        <end position="438"/>
    </location>
</feature>
<feature type="topological domain" description="Extracellular" evidence="1">
    <location>
        <begin position="439"/>
        <end position="539"/>
    </location>
</feature>
<feature type="transmembrane region" description="Helical; Name=10" evidence="1">
    <location>
        <begin position="540"/>
        <end position="562"/>
    </location>
</feature>
<feature type="topological domain" description="Cytoplasmic" evidence="1">
    <location>
        <begin position="563"/>
        <end position="571"/>
    </location>
</feature>
<feature type="transmembrane region" description="Helical; Name=11" evidence="1">
    <location>
        <begin position="572"/>
        <end position="597"/>
    </location>
</feature>
<feature type="topological domain" description="Extracellular" evidence="1">
    <location>
        <begin position="598"/>
        <end position="630"/>
    </location>
</feature>
<feature type="transmembrane region" description="Helical; Name=12" evidence="1">
    <location>
        <begin position="631"/>
        <end position="648"/>
    </location>
</feature>
<feature type="topological domain" description="Cytoplasmic" evidence="1">
    <location>
        <begin position="649"/>
        <end position="705"/>
    </location>
</feature>
<feature type="domain" description="Kazal-like" evidence="2">
    <location>
        <begin position="465"/>
        <end position="513"/>
    </location>
</feature>
<feature type="region of interest" description="Disordered" evidence="3">
    <location>
        <begin position="1"/>
        <end position="25"/>
    </location>
</feature>
<feature type="compositionally biased region" description="Gly residues" evidence="3">
    <location>
        <begin position="1"/>
        <end position="15"/>
    </location>
</feature>
<feature type="modified residue" description="N-acetylmethionine" evidence="11">
    <location>
        <position position="1"/>
    </location>
</feature>
<feature type="glycosylation site" description="N-linked (GlcNAc...) asparagine" evidence="1">
    <location>
        <position position="153"/>
    </location>
</feature>
<feature type="glycosylation site" description="N-linked (GlcNAc...) asparagine" evidence="1">
    <location>
        <position position="169"/>
    </location>
</feature>
<feature type="glycosylation site" description="N-linked (GlcNAc...) asparagine" evidence="1">
    <location>
        <position position="381"/>
    </location>
</feature>
<feature type="glycosylation site" description="N-linked (GlcNAc...) asparagine" evidence="1">
    <location>
        <position position="457"/>
    </location>
</feature>
<feature type="glycosylation site" description="N-linked (GlcNAc...) asparagine" evidence="1">
    <location>
        <position position="502"/>
    </location>
</feature>
<feature type="glycosylation site" description="N-linked (GlcNAc...) asparagine" evidence="1">
    <location>
        <position position="505"/>
    </location>
</feature>
<feature type="glycosylation site" description="N-linked (GlcNAc...) asparagine" evidence="1">
    <location>
        <position position="519"/>
    </location>
</feature>
<feature type="disulfide bond" evidence="2">
    <location>
        <begin position="471"/>
        <end position="501"/>
    </location>
</feature>
<feature type="disulfide bond" evidence="2">
    <location>
        <begin position="477"/>
        <end position="497"/>
    </location>
</feature>
<feature type="disulfide bond" evidence="2">
    <location>
        <begin position="486"/>
        <end position="511"/>
    </location>
</feature>
<feature type="splice variant" id="VSP_036833" description="In isoform 4." evidence="17">
    <location>
        <begin position="1"/>
        <end position="281"/>
    </location>
</feature>
<feature type="splice variant" id="VSP_036834" description="In isoform 3." evidence="17">
    <location>
        <begin position="1"/>
        <end position="58"/>
    </location>
</feature>
<feature type="splice variant" id="VSP_036835" description="In isoform 3." evidence="17">
    <original>YL</original>
    <variation>MN</variation>
    <location>
        <begin position="59"/>
        <end position="60"/>
    </location>
</feature>
<feature type="splice variant" id="VSP_036836" description="In isoform 3." evidence="17">
    <location>
        <begin position="641"/>
        <end position="710"/>
    </location>
</feature>
<feature type="splice variant" id="VSP_036837" description="In isoform 2." evidence="18">
    <original>EFFASTLTLDNLGRDPVPANQTHRTK</original>
    <variation>TEYQDIETEKTCPESHSPSEDSFVRS</variation>
    <location>
        <begin position="667"/>
        <end position="692"/>
    </location>
</feature>
<feature type="splice variant" id="VSP_036838" description="In isoform 2." evidence="18">
    <location>
        <begin position="693"/>
        <end position="710"/>
    </location>
</feature>
<feature type="sequence variant" id="VAR_054853" description="In dbSNP:rs1517618." evidence="4 7 8 14 15">
    <original>E</original>
    <variation>D</variation>
    <location>
        <position position="294"/>
    </location>
</feature>
<feature type="sequence conflict" description="In Ref. 4; BAF83561." evidence="20" ref="4">
    <original>K</original>
    <variation>R</variation>
    <location>
        <position position="40"/>
    </location>
</feature>
<feature type="sequence conflict" description="In Ref. 7; AAH00585." evidence="20" ref="7">
    <original>R</original>
    <variation>L</variation>
    <location>
        <position position="168"/>
    </location>
</feature>
<feature type="sequence conflict" description="In Ref. 4; BAF83561." evidence="20" ref="4">
    <original>G</original>
    <variation>D</variation>
    <location>
        <position position="188"/>
    </location>
</feature>
<feature type="sequence conflict" description="In Ref. 1; BAA89287." evidence="20" ref="1">
    <original>I</original>
    <variation>Y</variation>
    <location>
        <position position="202"/>
    </location>
</feature>
<dbReference type="EMBL" id="AB031050">
    <property type="protein sequence ID" value="BAA89287.1"/>
    <property type="molecule type" value="mRNA"/>
</dbReference>
<dbReference type="EMBL" id="AF205074">
    <property type="protein sequence ID" value="AAG42206.1"/>
    <property type="molecule type" value="mRNA"/>
</dbReference>
<dbReference type="EMBL" id="AF187816">
    <property type="protein sequence ID" value="AAG43446.1"/>
    <property type="molecule type" value="mRNA"/>
</dbReference>
<dbReference type="EMBL" id="AK290872">
    <property type="protein sequence ID" value="BAF83561.1"/>
    <property type="molecule type" value="mRNA"/>
</dbReference>
<dbReference type="EMBL" id="AK057031">
    <property type="protein sequence ID" value="BAG51847.1"/>
    <property type="molecule type" value="mRNA"/>
</dbReference>
<dbReference type="EMBL" id="AK097797">
    <property type="protein sequence ID" value="BAG53529.1"/>
    <property type="molecule type" value="mRNA"/>
</dbReference>
<dbReference type="EMBL" id="FJ515841">
    <property type="protein sequence ID" value="ACS13734.1"/>
    <property type="molecule type" value="Genomic_DNA"/>
</dbReference>
<dbReference type="EMBL" id="AC104020">
    <property type="status" value="NOT_ANNOTATED_CDS"/>
    <property type="molecule type" value="Genomic_DNA"/>
</dbReference>
<dbReference type="EMBL" id="AC104236">
    <property type="status" value="NOT_ANNOTATED_CDS"/>
    <property type="molecule type" value="Genomic_DNA"/>
</dbReference>
<dbReference type="EMBL" id="AC113190">
    <property type="status" value="NOT_ANNOTATED_CDS"/>
    <property type="molecule type" value="Genomic_DNA"/>
</dbReference>
<dbReference type="EMBL" id="AC116903">
    <property type="status" value="NOT_ANNOTATED_CDS"/>
    <property type="molecule type" value="Genomic_DNA"/>
</dbReference>
<dbReference type="EMBL" id="AC135996">
    <property type="status" value="NOT_ANNOTATED_CDS"/>
    <property type="molecule type" value="Genomic_DNA"/>
</dbReference>
<dbReference type="EMBL" id="BC000585">
    <property type="protein sequence ID" value="AAH00585.1"/>
    <property type="molecule type" value="mRNA"/>
</dbReference>
<dbReference type="CCDS" id="CCDS10371.1">
    <molecule id="Q9UIG8-1"/>
</dbReference>
<dbReference type="CCDS" id="CCDS45354.1">
    <molecule id="Q9UIG8-2"/>
</dbReference>
<dbReference type="RefSeq" id="NP_001138516.1">
    <molecule id="Q9UIG8-2"/>
    <property type="nucleotide sequence ID" value="NM_001145044.1"/>
</dbReference>
<dbReference type="RefSeq" id="NP_037404.2">
    <molecule id="Q9UIG8-1"/>
    <property type="nucleotide sequence ID" value="NM_013272.4"/>
</dbReference>
<dbReference type="SMR" id="Q9UIG8"/>
<dbReference type="BioGRID" id="118181">
    <property type="interactions" value="14"/>
</dbReference>
<dbReference type="FunCoup" id="Q9UIG8">
    <property type="interactions" value="780"/>
</dbReference>
<dbReference type="IntAct" id="Q9UIG8">
    <property type="interactions" value="5"/>
</dbReference>
<dbReference type="STRING" id="9606.ENSP00000320634"/>
<dbReference type="ChEMBL" id="CHEMBL2073685"/>
<dbReference type="DrugBank" id="DB00770">
    <property type="generic name" value="Alprostadil"/>
</dbReference>
<dbReference type="DrugBank" id="DB00345">
    <property type="generic name" value="Aminohippuric acid"/>
</dbReference>
<dbReference type="DrugBank" id="DB01053">
    <property type="generic name" value="Benzylpenicillin"/>
</dbReference>
<dbReference type="DrugBank" id="DB00286">
    <property type="generic name" value="Conjugated estrogens"/>
</dbReference>
<dbReference type="DrugBank" id="DB01160">
    <property type="generic name" value="Dinoprost tromethamine"/>
</dbReference>
<dbReference type="DrugBank" id="DB00917">
    <property type="generic name" value="Dinoprostone"/>
</dbReference>
<dbReference type="DrugBank" id="DB01088">
    <property type="generic name" value="Iloprost"/>
</dbReference>
<dbReference type="DrugBank" id="DB09198">
    <property type="generic name" value="Lobeglitazone"/>
</dbReference>
<dbReference type="DrugBank" id="DB00563">
    <property type="generic name" value="Methotrexate"/>
</dbReference>
<dbReference type="DrugBank" id="DB06654">
    <property type="generic name" value="Safinamide"/>
</dbReference>
<dbReference type="DrugBank" id="DB04348">
    <property type="generic name" value="Taurocholic acid"/>
</dbReference>
<dbReference type="DrugBank" id="DB09100">
    <property type="generic name" value="Thyroid, porcine"/>
</dbReference>
<dbReference type="TCDB" id="2.A.60.1.18">
    <property type="family name" value="the organo anion transporter (oat) family"/>
</dbReference>
<dbReference type="GlyCosmos" id="Q9UIG8">
    <property type="glycosylation" value="7 sites, No reported glycans"/>
</dbReference>
<dbReference type="GlyGen" id="Q9UIG8">
    <property type="glycosylation" value="8 sites, 1 N-linked glycan (1 site)"/>
</dbReference>
<dbReference type="iPTMnet" id="Q9UIG8"/>
<dbReference type="PhosphoSitePlus" id="Q9UIG8"/>
<dbReference type="SwissPalm" id="Q9UIG8"/>
<dbReference type="BioMuta" id="SLCO3A1"/>
<dbReference type="DMDM" id="296452954"/>
<dbReference type="jPOST" id="Q9UIG8"/>
<dbReference type="MassIVE" id="Q9UIG8"/>
<dbReference type="PaxDb" id="9606-ENSP00000320634"/>
<dbReference type="PeptideAtlas" id="Q9UIG8"/>
<dbReference type="ProteomicsDB" id="84519">
    <molecule id="Q9UIG8-1"/>
</dbReference>
<dbReference type="ProteomicsDB" id="84520">
    <molecule id="Q9UIG8-2"/>
</dbReference>
<dbReference type="ProteomicsDB" id="84521">
    <molecule id="Q9UIG8-3"/>
</dbReference>
<dbReference type="ProteomicsDB" id="84522">
    <molecule id="Q9UIG8-4"/>
</dbReference>
<dbReference type="Pumba" id="Q9UIG8"/>
<dbReference type="Antibodypedia" id="29012">
    <property type="antibodies" value="67 antibodies from 16 providers"/>
</dbReference>
<dbReference type="DNASU" id="28232"/>
<dbReference type="Ensembl" id="ENST00000318445.11">
    <molecule id="Q9UIG8-1"/>
    <property type="protein sequence ID" value="ENSP00000320634.6"/>
    <property type="gene ID" value="ENSG00000176463.14"/>
</dbReference>
<dbReference type="Ensembl" id="ENST00000424469.2">
    <molecule id="Q9UIG8-2"/>
    <property type="protein sequence ID" value="ENSP00000387846.2"/>
    <property type="gene ID" value="ENSG00000176463.14"/>
</dbReference>
<dbReference type="GeneID" id="28232"/>
<dbReference type="KEGG" id="hsa:28232"/>
<dbReference type="MANE-Select" id="ENST00000318445.11">
    <property type="protein sequence ID" value="ENSP00000320634.6"/>
    <property type="RefSeq nucleotide sequence ID" value="NM_013272.4"/>
    <property type="RefSeq protein sequence ID" value="NP_037404.2"/>
</dbReference>
<dbReference type="UCSC" id="uc002bqx.3">
    <molecule id="Q9UIG8-1"/>
    <property type="organism name" value="human"/>
</dbReference>
<dbReference type="AGR" id="HGNC:10952"/>
<dbReference type="CTD" id="28232"/>
<dbReference type="DisGeNET" id="28232"/>
<dbReference type="GeneCards" id="SLCO3A1"/>
<dbReference type="HGNC" id="HGNC:10952">
    <property type="gene designation" value="SLCO3A1"/>
</dbReference>
<dbReference type="HPA" id="ENSG00000176463">
    <property type="expression patterns" value="Tissue enhanced (brain)"/>
</dbReference>
<dbReference type="MIM" id="612435">
    <property type="type" value="gene"/>
</dbReference>
<dbReference type="neXtProt" id="NX_Q9UIG8"/>
<dbReference type="OpenTargets" id="ENSG00000176463"/>
<dbReference type="PharmGKB" id="PA35837"/>
<dbReference type="VEuPathDB" id="HostDB:ENSG00000176463"/>
<dbReference type="eggNOG" id="KOG3626">
    <property type="taxonomic scope" value="Eukaryota"/>
</dbReference>
<dbReference type="GeneTree" id="ENSGT01130000278312"/>
<dbReference type="HOGENOM" id="CLU_008954_3_0_1"/>
<dbReference type="InParanoid" id="Q9UIG8"/>
<dbReference type="OMA" id="NINCECQ"/>
<dbReference type="OrthoDB" id="5062115at2759"/>
<dbReference type="PAN-GO" id="Q9UIG8">
    <property type="GO annotations" value="4 GO annotations based on evolutionary models"/>
</dbReference>
<dbReference type="PhylomeDB" id="Q9UIG8"/>
<dbReference type="TreeFam" id="TF317540"/>
<dbReference type="PathwayCommons" id="Q9UIG8"/>
<dbReference type="Reactome" id="R-HSA-879518">
    <molecule id="Q9UIG8-1"/>
    <property type="pathway name" value="Transport of organic anions"/>
</dbReference>
<dbReference type="SignaLink" id="Q9UIG8"/>
<dbReference type="BioGRID-ORCS" id="28232">
    <property type="hits" value="7 hits in 1143 CRISPR screens"/>
</dbReference>
<dbReference type="ChiTaRS" id="SLCO3A1">
    <property type="organism name" value="human"/>
</dbReference>
<dbReference type="GeneWiki" id="SLCO3A1"/>
<dbReference type="GenomeRNAi" id="28232"/>
<dbReference type="Pharos" id="Q9UIG8">
    <property type="development level" value="Tbio"/>
</dbReference>
<dbReference type="PRO" id="PR:Q9UIG8"/>
<dbReference type="Proteomes" id="UP000005640">
    <property type="component" value="Chromosome 15"/>
</dbReference>
<dbReference type="RNAct" id="Q9UIG8">
    <property type="molecule type" value="protein"/>
</dbReference>
<dbReference type="Bgee" id="ENSG00000176463">
    <property type="expression patterns" value="Expressed in buccal mucosa cell and 190 other cell types or tissues"/>
</dbReference>
<dbReference type="ExpressionAtlas" id="Q9UIG8">
    <property type="expression patterns" value="baseline and differential"/>
</dbReference>
<dbReference type="GO" id="GO:0016324">
    <property type="term" value="C:apical plasma membrane"/>
    <property type="evidence" value="ECO:0007669"/>
    <property type="project" value="UniProtKB-SubCell"/>
</dbReference>
<dbReference type="GO" id="GO:0009925">
    <property type="term" value="C:basal plasma membrane"/>
    <property type="evidence" value="ECO:0000314"/>
    <property type="project" value="UniProtKB"/>
</dbReference>
<dbReference type="GO" id="GO:0016323">
    <property type="term" value="C:basolateral plasma membrane"/>
    <property type="evidence" value="ECO:0000318"/>
    <property type="project" value="GO_Central"/>
</dbReference>
<dbReference type="GO" id="GO:0005886">
    <property type="term" value="C:plasma membrane"/>
    <property type="evidence" value="ECO:0000314"/>
    <property type="project" value="ARUK-UCL"/>
</dbReference>
<dbReference type="GO" id="GO:0008514">
    <property type="term" value="F:organic anion transmembrane transporter activity"/>
    <property type="evidence" value="ECO:0000314"/>
    <property type="project" value="UniProtKB"/>
</dbReference>
<dbReference type="GO" id="GO:0015132">
    <property type="term" value="F:prostaglandin transmembrane transporter activity"/>
    <property type="evidence" value="ECO:0000314"/>
    <property type="project" value="UniProtKB"/>
</dbReference>
<dbReference type="GO" id="GO:0015347">
    <property type="term" value="F:sodium-independent organic anion transmembrane transporter activity"/>
    <property type="evidence" value="ECO:0000318"/>
    <property type="project" value="GO_Central"/>
</dbReference>
<dbReference type="GO" id="GO:0006811">
    <property type="term" value="P:monoatomic ion transport"/>
    <property type="evidence" value="ECO:0007669"/>
    <property type="project" value="UniProtKB-KW"/>
</dbReference>
<dbReference type="GO" id="GO:0043123">
    <property type="term" value="P:positive regulation of canonical NF-kappaB signal transduction"/>
    <property type="evidence" value="ECO:0000315"/>
    <property type="project" value="ARUK-UCL"/>
</dbReference>
<dbReference type="GO" id="GO:0043410">
    <property type="term" value="P:positive regulation of MAPK cascade"/>
    <property type="evidence" value="ECO:0000315"/>
    <property type="project" value="ARUK-UCL"/>
</dbReference>
<dbReference type="GO" id="GO:0015732">
    <property type="term" value="P:prostaglandin transport"/>
    <property type="evidence" value="ECO:0000314"/>
    <property type="project" value="ARUK-UCL"/>
</dbReference>
<dbReference type="GO" id="GO:0043252">
    <property type="term" value="P:sodium-independent organic anion transport"/>
    <property type="evidence" value="ECO:0000318"/>
    <property type="project" value="GO_Central"/>
</dbReference>
<dbReference type="GO" id="GO:0150104">
    <property type="term" value="P:transport across blood-brain barrier"/>
    <property type="evidence" value="ECO:0000303"/>
    <property type="project" value="ARUK-UCL"/>
</dbReference>
<dbReference type="CDD" id="cd17402">
    <property type="entry name" value="MFS_SLCO3_OATP3"/>
    <property type="match status" value="1"/>
</dbReference>
<dbReference type="Gene3D" id="1.20.1250.20">
    <property type="entry name" value="MFS general substrate transporter like domains"/>
    <property type="match status" value="1"/>
</dbReference>
<dbReference type="InterPro" id="IPR002350">
    <property type="entry name" value="Kazal_dom"/>
</dbReference>
<dbReference type="InterPro" id="IPR036058">
    <property type="entry name" value="Kazal_dom_sf"/>
</dbReference>
<dbReference type="InterPro" id="IPR036259">
    <property type="entry name" value="MFS_trans_sf"/>
</dbReference>
<dbReference type="InterPro" id="IPR004156">
    <property type="entry name" value="OATP"/>
</dbReference>
<dbReference type="NCBIfam" id="TIGR00805">
    <property type="entry name" value="oat"/>
    <property type="match status" value="1"/>
</dbReference>
<dbReference type="PANTHER" id="PTHR11388">
    <property type="entry name" value="ORGANIC ANION TRANSPORTER"/>
    <property type="match status" value="1"/>
</dbReference>
<dbReference type="PANTHER" id="PTHR11388:SF86">
    <property type="entry name" value="SOLUTE CARRIER ORGANIC ANION TRANSPORTER FAMILY MEMBER 3A1"/>
    <property type="match status" value="1"/>
</dbReference>
<dbReference type="Pfam" id="PF07648">
    <property type="entry name" value="Kazal_2"/>
    <property type="match status" value="1"/>
</dbReference>
<dbReference type="Pfam" id="PF03137">
    <property type="entry name" value="OATP"/>
    <property type="match status" value="1"/>
</dbReference>
<dbReference type="SUPFAM" id="SSF100895">
    <property type="entry name" value="Kazal-type serine protease inhibitors"/>
    <property type="match status" value="1"/>
</dbReference>
<dbReference type="SUPFAM" id="SSF103473">
    <property type="entry name" value="MFS general substrate transporter"/>
    <property type="match status" value="1"/>
</dbReference>
<dbReference type="PROSITE" id="PS51465">
    <property type="entry name" value="KAZAL_2"/>
    <property type="match status" value="1"/>
</dbReference>
<protein>
    <recommendedName>
        <fullName>Solute carrier organic anion transporter family member 3A1</fullName>
        <shortName evidence="19">OATP3A1</shortName>
    </recommendedName>
    <alternativeName>
        <fullName>Organic anion transporter polypeptide-related protein 3</fullName>
        <shortName>OATP-RP3</shortName>
        <shortName>OATPRP3</shortName>
    </alternativeName>
    <alternativeName>
        <fullName>Organic anion-transporting polypeptide D</fullName>
        <shortName evidence="16">OATP-D</shortName>
    </alternativeName>
    <alternativeName>
        <fullName>PGE1 transporter</fullName>
    </alternativeName>
    <alternativeName>
        <fullName>Sodium-independent organic anion transporter D</fullName>
    </alternativeName>
    <alternativeName>
        <fullName>Solute carrier family 21 member 11</fullName>
    </alternativeName>
</protein>
<comment type="function">
    <text evidence="4 6 9 10 12 20">Putative organic anion antiporter with apparent broad substrate specificity. Recognizes various substrates including thyroid hormone L-thyroxine, prostanoids such as prostaglandin E1 and E2, bile acids such as taurocholate, glycolate and glycochenodeoxycholate and peptide hormones such as L-arginine vasopressin, likely operating in a tissue-specific manner (PubMed:10873595, PubMed:14631946, PubMed:16971491, PubMed:19129463, PubMed:30063921). The transport mechanism, its electrogenicity and potential tissue-specific counterions remain to be elucidated (Probable).</text>
</comment>
<comment type="catalytic activity">
    <molecule>Isoform 1</molecule>
    <reaction evidence="9 10">
        <text>L-thyroxine(out) = L-thyroxine(in)</text>
        <dbReference type="Rhea" id="RHEA:71819"/>
        <dbReference type="ChEBI" id="CHEBI:58448"/>
    </reaction>
    <physiologicalReaction direction="left-to-right" evidence="23 24">
        <dbReference type="Rhea" id="RHEA:71820"/>
    </physiologicalReaction>
</comment>
<comment type="catalytic activity">
    <molecule>Isoform 2</molecule>
    <reaction evidence="9 10">
        <text>L-thyroxine(out) = L-thyroxine(in)</text>
        <dbReference type="Rhea" id="RHEA:71819"/>
        <dbReference type="ChEBI" id="CHEBI:58448"/>
    </reaction>
    <physiologicalReaction direction="left-to-right" evidence="23 24">
        <dbReference type="Rhea" id="RHEA:71820"/>
    </physiologicalReaction>
</comment>
<comment type="catalytic activity">
    <molecule>Isoform 1</molecule>
    <reaction evidence="6 9">
        <text>prostaglandin E1(out) = prostaglandin E1(in)</text>
        <dbReference type="Rhea" id="RHEA:50980"/>
        <dbReference type="ChEBI" id="CHEBI:57397"/>
    </reaction>
    <physiologicalReaction direction="left-to-right" evidence="22 23">
        <dbReference type="Rhea" id="RHEA:50981"/>
    </physiologicalReaction>
</comment>
<comment type="catalytic activity">
    <molecule>Isoform 2</molecule>
    <reaction evidence="9">
        <text>prostaglandin E1(out) = prostaglandin E1(in)</text>
        <dbReference type="Rhea" id="RHEA:50980"/>
        <dbReference type="ChEBI" id="CHEBI:57397"/>
    </reaction>
    <physiologicalReaction direction="left-to-right" evidence="23">
        <dbReference type="Rhea" id="RHEA:50981"/>
    </physiologicalReaction>
</comment>
<comment type="catalytic activity">
    <molecule>Isoform 1</molecule>
    <reaction evidence="4 6 9">
        <text>prostaglandin E2(out) = prostaglandin E2(in)</text>
        <dbReference type="Rhea" id="RHEA:50984"/>
        <dbReference type="ChEBI" id="CHEBI:606564"/>
    </reaction>
    <physiologicalReaction direction="left-to-right" evidence="21 22 23">
        <dbReference type="Rhea" id="RHEA:50985"/>
    </physiologicalReaction>
</comment>
<comment type="catalytic activity">
    <molecule>Isoform 2</molecule>
    <reaction evidence="9">
        <text>prostaglandin E2(out) = prostaglandin E2(in)</text>
        <dbReference type="Rhea" id="RHEA:50984"/>
        <dbReference type="ChEBI" id="CHEBI:606564"/>
    </reaction>
    <physiologicalReaction direction="left-to-right" evidence="23">
        <dbReference type="Rhea" id="RHEA:50985"/>
    </physiologicalReaction>
</comment>
<comment type="catalytic activity">
    <molecule>Isoform 1</molecule>
    <reaction evidence="6">
        <text>prostaglandin F2alpha(out) = prostaglandin F2alpha(in)</text>
        <dbReference type="Rhea" id="RHEA:50988"/>
        <dbReference type="ChEBI" id="CHEBI:57404"/>
    </reaction>
    <physiologicalReaction direction="left-to-right" evidence="22">
        <dbReference type="Rhea" id="RHEA:50989"/>
    </physiologicalReaction>
</comment>
<comment type="catalytic activity">
    <molecule>Isoform 2</molecule>
    <reaction evidence="9">
        <text>(5Z,8Z,11Z,14Z)-eicosatetraenoate(out) = (5Z,8Z,11Z,14Z)-eicosatetraenoate(in)</text>
        <dbReference type="Rhea" id="RHEA:71395"/>
        <dbReference type="ChEBI" id="CHEBI:32395"/>
    </reaction>
    <physiologicalReaction direction="left-to-right" evidence="23">
        <dbReference type="Rhea" id="RHEA:71396"/>
    </physiologicalReaction>
</comment>
<comment type="catalytic activity">
    <reaction evidence="12">
        <text>taurocholate(out) = taurocholate(in)</text>
        <dbReference type="Rhea" id="RHEA:71703"/>
        <dbReference type="ChEBI" id="CHEBI:36257"/>
    </reaction>
    <physiologicalReaction direction="right-to-left" evidence="25">
        <dbReference type="Rhea" id="RHEA:71705"/>
    </physiologicalReaction>
</comment>
<comment type="catalytic activity">
    <reaction evidence="12">
        <text>glycocholate(out) = glycocholate(in)</text>
        <dbReference type="Rhea" id="RHEA:71851"/>
        <dbReference type="ChEBI" id="CHEBI:29746"/>
    </reaction>
    <physiologicalReaction direction="right-to-left" evidence="25">
        <dbReference type="Rhea" id="RHEA:71853"/>
    </physiologicalReaction>
</comment>
<comment type="catalytic activity">
    <molecule>Isoform 1</molecule>
    <reaction evidence="10">
        <text>estrone 3-sulfate(out) = estrone 3-sulfate(in)</text>
        <dbReference type="Rhea" id="RHEA:71835"/>
        <dbReference type="ChEBI" id="CHEBI:60050"/>
    </reaction>
    <physiologicalReaction direction="left-to-right" evidence="24">
        <dbReference type="Rhea" id="RHEA:71836"/>
    </physiologicalReaction>
</comment>
<comment type="catalytic activity">
    <molecule>Isoform 2</molecule>
    <reaction evidence="10">
        <text>estrone 3-sulfate(out) = estrone 3-sulfate(in)</text>
        <dbReference type="Rhea" id="RHEA:71835"/>
        <dbReference type="ChEBI" id="CHEBI:60050"/>
    </reaction>
    <physiologicalReaction direction="left-to-right" evidence="24">
        <dbReference type="Rhea" id="RHEA:71836"/>
    </physiologicalReaction>
</comment>
<comment type="catalytic activity">
    <molecule>Isoform 1</molecule>
    <reaction evidence="9">
        <text>argipressin(out) = argipressin(in)</text>
        <dbReference type="Rhea" id="RHEA:75979"/>
        <dbReference type="ChEBI" id="CHEBI:194507"/>
    </reaction>
    <physiologicalReaction direction="left-to-right" evidence="23">
        <dbReference type="Rhea" id="RHEA:75980"/>
    </physiologicalReaction>
</comment>
<comment type="catalytic activity">
    <molecule>Isoform 2</molecule>
    <reaction evidence="9">
        <text>argipressin(out) = argipressin(in)</text>
        <dbReference type="Rhea" id="RHEA:75979"/>
        <dbReference type="ChEBI" id="CHEBI:194507"/>
    </reaction>
    <physiologicalReaction direction="left-to-right" evidence="23">
        <dbReference type="Rhea" id="RHEA:75980"/>
    </physiologicalReaction>
</comment>
<comment type="activity regulation">
    <text evidence="10">Stimulated by extracellular acidic pH.</text>
</comment>
<comment type="biophysicochemical properties">
    <molecule>Isoform 1</molecule>
    <kinetics>
        <KM evidence="9">101 nM for prostaglandin E1</KM>
        <KM evidence="6">48.5 nM for prostaglandin E1</KM>
        <KM evidence="9">219 nM for prostaglandin E2</KM>
        <KM evidence="6">55.5 nM for prostaglandin E2</KM>
    </kinetics>
</comment>
<comment type="biophysicochemical properties">
    <molecule>Isoform 2</molecule>
    <kinetics>
        <KM evidence="9">218 nM for prostaglandin E1</KM>
        <KM evidence="9">371 nM for prostaglandin E2</KM>
    </kinetics>
</comment>
<comment type="interaction">
    <interactant intactId="EBI-13041931">
        <id>Q9UIG8-2</id>
    </interactant>
    <interactant intactId="EBI-13059134">
        <id>Q13520</id>
        <label>AQP6</label>
    </interactant>
    <organismsDiffer>false</organismsDiffer>
    <experiments>3</experiments>
</comment>
<comment type="interaction">
    <interactant intactId="EBI-13041931">
        <id>Q9UIG8-2</id>
    </interactant>
    <interactant intactId="EBI-12003442">
        <id>Q8WVX3-2</id>
        <label>C4orf3</label>
    </interactant>
    <organismsDiffer>false</organismsDiffer>
    <experiments>3</experiments>
</comment>
<comment type="interaction">
    <interactant intactId="EBI-13041931">
        <id>Q9UIG8-2</id>
    </interactant>
    <interactant intactId="EBI-712073">
        <id>Q8NBJ4</id>
        <label>GOLM1</label>
    </interactant>
    <organismsDiffer>false</organismsDiffer>
    <experiments>3</experiments>
</comment>
<comment type="interaction">
    <interactant intactId="EBI-13041931">
        <id>Q9UIG8-2</id>
    </interactant>
    <interactant intactId="EBI-11988865">
        <id>A5PKU2</id>
        <label>TUSC5</label>
    </interactant>
    <organismsDiffer>false</organismsDiffer>
    <experiments>3</experiments>
</comment>
<comment type="subcellular location">
    <molecule>Isoform 1</molecule>
    <subcellularLocation>
        <location evidence="9">Basolateral cell membrane</location>
        <topology evidence="1">Multi-pass membrane protein</topology>
    </subcellularLocation>
    <text evidence="9">Localized to the basolateral membrane of choroid plexus epithelium.</text>
</comment>
<comment type="subcellular location">
    <molecule>Isoform 2</molecule>
    <subcellularLocation>
        <location evidence="9">Apical cell membrane</location>
        <topology evidence="1">Multi-pass membrane protein</topology>
    </subcellularLocation>
    <subcellularLocation>
        <location evidence="13">Basal cell membrane</location>
        <topology evidence="1">Multi-pass membrane protein</topology>
    </subcellularLocation>
    <text evidence="9 13">Localized to the basal membrane of Sertoli cells (PubMed:35307651). Localized to the apical membrane of choroid plexus epithelium (PubMed:16971491).</text>
</comment>
<comment type="alternative products">
    <event type="alternative splicing"/>
    <isoform>
        <id>Q9UIG8-1</id>
        <name>1</name>
        <name>OATP3A1-v1</name>
        <sequence type="displayed"/>
    </isoform>
    <isoform>
        <id>Q9UIG8-2</id>
        <name>2</name>
        <name>OATP3A1-v2</name>
        <sequence type="described" ref="VSP_036837 VSP_036838"/>
    </isoform>
    <isoform>
        <id>Q9UIG8-3</id>
        <name>3</name>
        <sequence type="described" ref="VSP_036834 VSP_036835 VSP_036836"/>
    </isoform>
    <isoform>
        <id>Q9UIG8-4</id>
        <name>4</name>
        <sequence type="described" ref="VSP_036833"/>
    </isoform>
</comment>
<comment type="tissue specificity">
    <text evidence="9">Generally the expression of isoform 1 is higher than that of isoform 2.</text>
</comment>
<comment type="tissue specificity">
    <molecule>Isoform 1</molecule>
    <text evidence="4 5 6 9">Expressed in placental trophoblasts (PubMed:10873595, PubMed:12409283). Expressed in pancreas, kidney, liver, lung, brain, heart, cerebellum, peripheral blood leukocyte, colon, small intestine, ovary, testis, prostate, thyroid, thymus and spleen (PubMed:10873595, PubMed:14631946, PubMed:16971491). Expressed in fetal brain, heart, kidney, liver, lung, skeletal muscle, spleen and pancreas (PubMed:10873595). In testis, detected in spermatogonia at different stages and absent from Sertoli cells. Expressed in the choroid plexus epithelium, at the basolateral membrane. In brain, also very abundant in the gray matter of the frontal cortex, but not associated with neuronal cell bodies. Not detected in the white matter (PubMed:16971491).</text>
</comment>
<comment type="tissue specificity">
    <molecule>Isoform 2</molecule>
    <text evidence="9 13">Expressed in heart, brain, cerebellum, testis, lung, thyroid, spoleen and liver (PubMed:16971491). In testis, primarily localized to the basal membrane of Sertoli cells and weakly expressed within the tubules (PubMed:16971491, PubMed:35307651). In testis, also present in spermatogonia at different stages. In brain, expressed in the choroid plexus epithelium, at the apical membrane as well as in the subapical intracellular vesicular compartments. In brain, also associated with neuronal bodies and axons in both the gray and the white matters of the frontal cortex (PubMed:16971491).</text>
</comment>
<comment type="induction">
    <text evidence="12">Transcriptionally up-regulated by SP1 and RELA in response to FGF19.</text>
</comment>
<comment type="similarity">
    <text evidence="20">Belongs to the organo anion transporter (TC 2.A.60) family.</text>
</comment>
<accession>Q9UIG8</accession>
<accession>A8K4A7</accession>
<accession>B3KPY5</accession>
<accession>B3KUR7</accession>
<accession>C6G486</accession>
<accession>Q9BW73</accession>
<accession>Q9GZV2</accession>
<name>SO3A1_HUMAN</name>
<proteinExistence type="evidence at protein level"/>
<sequence length="710" mass="76553">MQGKKPGGSSGGGRSGELQGDEAQRNKKKKKKVSCFSNIKIFLVSECALMLAQGTVGAYLVSVLTTLERRFNLQSADVGVIASSFEIGNLALILFVSYFGARGHRPRLIGCGGIVMALGALLSALPEFLTHQYKYEAGEIRWGAEGRDVCAANGSGGDEGPDPDLICRNRTATNMMYLLLIGAQVLLGIGATPVQPLGVSYIDDHVRRKDSSLYIGILFTMLVFGPACGFILGSFCTKIYVDAVFIDTSNLDITPDDPRWIGAWWGGFLLCGALLFFSSLLMFGFPQSLPPHSEPAMESEQAMLSEREYERPKPSNGVLRHPLEPDSSASCFQQLRVIPKVTKHLLSNPVFTCIILAACMEIAVVAGFAAFLGKYLEQQFNLTTSSANQLLGMTAIPCACLGIFLGGLLVKKLSLSALGAIRMAMLVNLVSTACYVSFLFLGCDTGPVAGVTVPYGNSTAPGSALDPYSPCNNNCECQTDSFTPVCGADGITYLSACFAGCNSTNLTGCACLTTVPAENATVVPGKCPSPGCQEAFLTFLCVMCICSLIGAMAQTPSVIILIRTVSPELKSYALGVLFLLLRLLGFIPPPLIFGAGIDSTCLFWSTFCGEQGACVLYDNVVYRYLYVSIAIALKSFAFILYTTTWQCLRKNYKRYIKNHEGGLSTSEFFASTLTLDNLGRDPVPANQTHRTKFIYNLEDHEWCENMESVL</sequence>
<gene>
    <name type="primary">SLCO3A1</name>
    <name type="synonym">OATP3A1</name>
    <name type="synonym">OATPD</name>
    <name type="synonym">SLC21A11</name>
</gene>